<dbReference type="EMBL" id="CP000934">
    <property type="protein sequence ID" value="ACE84036.1"/>
    <property type="molecule type" value="Genomic_DNA"/>
</dbReference>
<dbReference type="RefSeq" id="WP_012486364.1">
    <property type="nucleotide sequence ID" value="NC_010995.1"/>
</dbReference>
<dbReference type="SMR" id="B3PK39"/>
<dbReference type="STRING" id="498211.CJA_0701"/>
<dbReference type="KEGG" id="cja:CJA_0701"/>
<dbReference type="eggNOG" id="COG0089">
    <property type="taxonomic scope" value="Bacteria"/>
</dbReference>
<dbReference type="HOGENOM" id="CLU_037562_3_1_6"/>
<dbReference type="OrthoDB" id="9793353at2"/>
<dbReference type="Proteomes" id="UP000001036">
    <property type="component" value="Chromosome"/>
</dbReference>
<dbReference type="GO" id="GO:1990904">
    <property type="term" value="C:ribonucleoprotein complex"/>
    <property type="evidence" value="ECO:0007669"/>
    <property type="project" value="UniProtKB-KW"/>
</dbReference>
<dbReference type="GO" id="GO:0005840">
    <property type="term" value="C:ribosome"/>
    <property type="evidence" value="ECO:0007669"/>
    <property type="project" value="UniProtKB-KW"/>
</dbReference>
<dbReference type="GO" id="GO:0019843">
    <property type="term" value="F:rRNA binding"/>
    <property type="evidence" value="ECO:0007669"/>
    <property type="project" value="UniProtKB-UniRule"/>
</dbReference>
<dbReference type="GO" id="GO:0003735">
    <property type="term" value="F:structural constituent of ribosome"/>
    <property type="evidence" value="ECO:0007669"/>
    <property type="project" value="InterPro"/>
</dbReference>
<dbReference type="GO" id="GO:0006412">
    <property type="term" value="P:translation"/>
    <property type="evidence" value="ECO:0007669"/>
    <property type="project" value="UniProtKB-UniRule"/>
</dbReference>
<dbReference type="FunFam" id="3.30.70.330:FF:000001">
    <property type="entry name" value="50S ribosomal protein L23"/>
    <property type="match status" value="1"/>
</dbReference>
<dbReference type="Gene3D" id="3.30.70.330">
    <property type="match status" value="1"/>
</dbReference>
<dbReference type="HAMAP" id="MF_01369_B">
    <property type="entry name" value="Ribosomal_uL23_B"/>
    <property type="match status" value="1"/>
</dbReference>
<dbReference type="InterPro" id="IPR012677">
    <property type="entry name" value="Nucleotide-bd_a/b_plait_sf"/>
</dbReference>
<dbReference type="InterPro" id="IPR013025">
    <property type="entry name" value="Ribosomal_uL23-like"/>
</dbReference>
<dbReference type="InterPro" id="IPR012678">
    <property type="entry name" value="Ribosomal_uL23/eL15/eS24_sf"/>
</dbReference>
<dbReference type="NCBIfam" id="NF004359">
    <property type="entry name" value="PRK05738.1-3"/>
    <property type="match status" value="1"/>
</dbReference>
<dbReference type="NCBIfam" id="NF004363">
    <property type="entry name" value="PRK05738.2-4"/>
    <property type="match status" value="1"/>
</dbReference>
<dbReference type="PANTHER" id="PTHR11620">
    <property type="entry name" value="60S RIBOSOMAL PROTEIN L23A"/>
    <property type="match status" value="1"/>
</dbReference>
<dbReference type="Pfam" id="PF00276">
    <property type="entry name" value="Ribosomal_L23"/>
    <property type="match status" value="1"/>
</dbReference>
<dbReference type="SUPFAM" id="SSF54189">
    <property type="entry name" value="Ribosomal proteins S24e, L23 and L15e"/>
    <property type="match status" value="1"/>
</dbReference>
<gene>
    <name evidence="1" type="primary">rplW</name>
    <name type="ordered locus">CJA_0701</name>
</gene>
<sequence length="98" mass="10869">MNQERIYKVLLGPVVSEKSAAVGEASNQVVFKVLADASKVEIKAAVQALFNTKVESVRVLNVKGKTKRTRYGVGKRSDWKKAYVRLEQGQEIDFAVAE</sequence>
<proteinExistence type="inferred from homology"/>
<feature type="chain" id="PRO_1000144547" description="Large ribosomal subunit protein uL23">
    <location>
        <begin position="1"/>
        <end position="98"/>
    </location>
</feature>
<reference key="1">
    <citation type="journal article" date="2008" name="J. Bacteriol.">
        <title>Insights into plant cell wall degradation from the genome sequence of the soil bacterium Cellvibrio japonicus.</title>
        <authorList>
            <person name="DeBoy R.T."/>
            <person name="Mongodin E.F."/>
            <person name="Fouts D.E."/>
            <person name="Tailford L.E."/>
            <person name="Khouri H."/>
            <person name="Emerson J.B."/>
            <person name="Mohamoud Y."/>
            <person name="Watkins K."/>
            <person name="Henrissat B."/>
            <person name="Gilbert H.J."/>
            <person name="Nelson K.E."/>
        </authorList>
    </citation>
    <scope>NUCLEOTIDE SEQUENCE [LARGE SCALE GENOMIC DNA]</scope>
    <source>
        <strain>Ueda107</strain>
    </source>
</reference>
<evidence type="ECO:0000255" key="1">
    <source>
        <dbReference type="HAMAP-Rule" id="MF_01369"/>
    </source>
</evidence>
<evidence type="ECO:0000305" key="2"/>
<comment type="function">
    <text evidence="1">One of the early assembly proteins it binds 23S rRNA. One of the proteins that surrounds the polypeptide exit tunnel on the outside of the ribosome. Forms the main docking site for trigger factor binding to the ribosome.</text>
</comment>
<comment type="subunit">
    <text evidence="1">Part of the 50S ribosomal subunit. Contacts protein L29, and trigger factor when it is bound to the ribosome.</text>
</comment>
<comment type="similarity">
    <text evidence="1">Belongs to the universal ribosomal protein uL23 family.</text>
</comment>
<accession>B3PK39</accession>
<name>RL23_CELJU</name>
<organism>
    <name type="scientific">Cellvibrio japonicus (strain Ueda107)</name>
    <name type="common">Pseudomonas fluorescens subsp. cellulosa</name>
    <dbReference type="NCBI Taxonomy" id="498211"/>
    <lineage>
        <taxon>Bacteria</taxon>
        <taxon>Pseudomonadati</taxon>
        <taxon>Pseudomonadota</taxon>
        <taxon>Gammaproteobacteria</taxon>
        <taxon>Cellvibrionales</taxon>
        <taxon>Cellvibrionaceae</taxon>
        <taxon>Cellvibrio</taxon>
    </lineage>
</organism>
<protein>
    <recommendedName>
        <fullName evidence="1">Large ribosomal subunit protein uL23</fullName>
    </recommendedName>
    <alternativeName>
        <fullName evidence="2">50S ribosomal protein L23</fullName>
    </alternativeName>
</protein>
<keyword id="KW-1185">Reference proteome</keyword>
<keyword id="KW-0687">Ribonucleoprotein</keyword>
<keyword id="KW-0689">Ribosomal protein</keyword>
<keyword id="KW-0694">RNA-binding</keyword>
<keyword id="KW-0699">rRNA-binding</keyword>